<sequence length="347" mass="38755">MKAIKLTGHERPLTQVKYNKEGDLLFSCSKDSSASVWYSLNGERLGTLDGHTGTIWSIDVDCFTKYCVTGSADYSIKLWDVSNGQCVATWKSPVPVKRVEFSPCGNYFLAILDNVMKNPGSINIYEIERDSATHELTKVSEEPIHKIITHEGLDAATVAGWSTKGKYIIAGHKDGKISKYDVSNNYEYVDSIDLHEKSISDMQFSPDLTYFITSSRDTNSFLVDVSTLQVLKKYETDCPLNTAVITPLKEFIILGGGQEAKDVTTTSANEGKFEARFYHKIFEEEIGRVQGHFGPLNTVAISPQGTSYASGGEDGFIRLHHFEKSYFDFKYDVEKAAEAKEHMQEAN</sequence>
<reference key="1">
    <citation type="journal article" date="2007" name="Proc. Natl. Acad. Sci. U.S.A.">
        <title>Genome sequencing and comparative analysis of Saccharomyces cerevisiae strain YJM789.</title>
        <authorList>
            <person name="Wei W."/>
            <person name="McCusker J.H."/>
            <person name="Hyman R.W."/>
            <person name="Jones T."/>
            <person name="Ning Y."/>
            <person name="Cao Z."/>
            <person name="Gu Z."/>
            <person name="Bruno D."/>
            <person name="Miranda M."/>
            <person name="Nguyen M."/>
            <person name="Wilhelmy J."/>
            <person name="Komp C."/>
            <person name="Tamse R."/>
            <person name="Wang X."/>
            <person name="Jia P."/>
            <person name="Luedi P."/>
            <person name="Oefner P.J."/>
            <person name="David L."/>
            <person name="Dietrich F.S."/>
            <person name="Li Y."/>
            <person name="Davis R.W."/>
            <person name="Steinmetz L.M."/>
        </authorList>
    </citation>
    <scope>NUCLEOTIDE SEQUENCE [LARGE SCALE GENOMIC DNA]</scope>
    <source>
        <strain>YJM789</strain>
    </source>
</reference>
<dbReference type="EMBL" id="AAFW02000021">
    <property type="protein sequence ID" value="EDN64079.1"/>
    <property type="molecule type" value="Genomic_DNA"/>
</dbReference>
<dbReference type="EMDB" id="EMD-0058"/>
<dbReference type="EMDB" id="EMD-4328"/>
<dbReference type="SMR" id="A6ZMK5"/>
<dbReference type="IntAct" id="A6ZMK5">
    <property type="interactions" value="2"/>
</dbReference>
<dbReference type="MINT" id="A6ZMK5"/>
<dbReference type="HOGENOM" id="CLU_043845_0_1_1"/>
<dbReference type="Proteomes" id="UP000007060">
    <property type="component" value="Unassembled WGS sequence"/>
</dbReference>
<dbReference type="GO" id="GO:0016282">
    <property type="term" value="C:eukaryotic 43S preinitiation complex"/>
    <property type="evidence" value="ECO:0007669"/>
    <property type="project" value="UniProtKB-UniRule"/>
</dbReference>
<dbReference type="GO" id="GO:0033290">
    <property type="term" value="C:eukaryotic 48S preinitiation complex"/>
    <property type="evidence" value="ECO:0007669"/>
    <property type="project" value="UniProtKB-UniRule"/>
</dbReference>
<dbReference type="GO" id="GO:0071541">
    <property type="term" value="C:eukaryotic translation initiation factor 3 complex, eIF3m"/>
    <property type="evidence" value="ECO:0007669"/>
    <property type="project" value="TreeGrafter"/>
</dbReference>
<dbReference type="GO" id="GO:0003723">
    <property type="term" value="F:RNA binding"/>
    <property type="evidence" value="ECO:0007669"/>
    <property type="project" value="TreeGrafter"/>
</dbReference>
<dbReference type="GO" id="GO:0003743">
    <property type="term" value="F:translation initiation factor activity"/>
    <property type="evidence" value="ECO:0007669"/>
    <property type="project" value="UniProtKB-UniRule"/>
</dbReference>
<dbReference type="GO" id="GO:0001732">
    <property type="term" value="P:formation of cytoplasmic translation initiation complex"/>
    <property type="evidence" value="ECO:0007669"/>
    <property type="project" value="UniProtKB-UniRule"/>
</dbReference>
<dbReference type="FunFam" id="2.130.10.10:FF:000127">
    <property type="entry name" value="Eukaryotic translation initiation factor 3 subunit I"/>
    <property type="match status" value="1"/>
</dbReference>
<dbReference type="Gene3D" id="2.130.10.10">
    <property type="entry name" value="YVTN repeat-like/Quinoprotein amine dehydrogenase"/>
    <property type="match status" value="1"/>
</dbReference>
<dbReference type="HAMAP" id="MF_03008">
    <property type="entry name" value="eIF3i"/>
    <property type="match status" value="1"/>
</dbReference>
<dbReference type="InterPro" id="IPR027525">
    <property type="entry name" value="eIF3i"/>
</dbReference>
<dbReference type="InterPro" id="IPR015943">
    <property type="entry name" value="WD40/YVTN_repeat-like_dom_sf"/>
</dbReference>
<dbReference type="InterPro" id="IPR019775">
    <property type="entry name" value="WD40_repeat_CS"/>
</dbReference>
<dbReference type="InterPro" id="IPR036322">
    <property type="entry name" value="WD40_repeat_dom_sf"/>
</dbReference>
<dbReference type="InterPro" id="IPR001680">
    <property type="entry name" value="WD40_rpt"/>
</dbReference>
<dbReference type="PANTHER" id="PTHR19877">
    <property type="entry name" value="EUKARYOTIC TRANSLATION INITIATION FACTOR 3 SUBUNIT I"/>
    <property type="match status" value="1"/>
</dbReference>
<dbReference type="PANTHER" id="PTHR19877:SF1">
    <property type="entry name" value="EUKARYOTIC TRANSLATION INITIATION FACTOR 3 SUBUNIT I"/>
    <property type="match status" value="1"/>
</dbReference>
<dbReference type="Pfam" id="PF24805">
    <property type="entry name" value="EIF3I"/>
    <property type="match status" value="1"/>
</dbReference>
<dbReference type="SMART" id="SM00320">
    <property type="entry name" value="WD40"/>
    <property type="match status" value="6"/>
</dbReference>
<dbReference type="SUPFAM" id="SSF50978">
    <property type="entry name" value="WD40 repeat-like"/>
    <property type="match status" value="1"/>
</dbReference>
<dbReference type="PROSITE" id="PS00678">
    <property type="entry name" value="WD_REPEATS_1"/>
    <property type="match status" value="1"/>
</dbReference>
<dbReference type="PROSITE" id="PS50082">
    <property type="entry name" value="WD_REPEATS_2"/>
    <property type="match status" value="3"/>
</dbReference>
<dbReference type="PROSITE" id="PS50294">
    <property type="entry name" value="WD_REPEATS_REGION"/>
    <property type="match status" value="2"/>
</dbReference>
<feature type="chain" id="PRO_0000366904" description="Eukaryotic translation initiation factor 3 subunit I">
    <location>
        <begin position="1"/>
        <end position="347"/>
    </location>
</feature>
<feature type="repeat" description="WD 1">
    <location>
        <begin position="8"/>
        <end position="47"/>
    </location>
</feature>
<feature type="repeat" description="WD 2">
    <location>
        <begin position="50"/>
        <end position="89"/>
    </location>
</feature>
<feature type="repeat" description="WD 3">
    <location>
        <begin position="149"/>
        <end position="190"/>
    </location>
</feature>
<feature type="repeat" description="WD 4">
    <location>
        <begin position="194"/>
        <end position="233"/>
    </location>
</feature>
<feature type="repeat" description="WD 5">
    <location>
        <begin position="291"/>
        <end position="330"/>
    </location>
</feature>
<feature type="modified residue" description="Phosphoserine" evidence="1">
    <location>
        <position position="302"/>
    </location>
</feature>
<proteinExistence type="inferred from homology"/>
<organism>
    <name type="scientific">Saccharomyces cerevisiae (strain YJM789)</name>
    <name type="common">Baker's yeast</name>
    <dbReference type="NCBI Taxonomy" id="307796"/>
    <lineage>
        <taxon>Eukaryota</taxon>
        <taxon>Fungi</taxon>
        <taxon>Dikarya</taxon>
        <taxon>Ascomycota</taxon>
        <taxon>Saccharomycotina</taxon>
        <taxon>Saccharomycetes</taxon>
        <taxon>Saccharomycetales</taxon>
        <taxon>Saccharomycetaceae</taxon>
        <taxon>Saccharomyces</taxon>
    </lineage>
</organism>
<keyword id="KW-0963">Cytoplasm</keyword>
<keyword id="KW-0396">Initiation factor</keyword>
<keyword id="KW-0597">Phosphoprotein</keyword>
<keyword id="KW-0648">Protein biosynthesis</keyword>
<keyword id="KW-0677">Repeat</keyword>
<keyword id="KW-0853">WD repeat</keyword>
<comment type="function">
    <text evidence="2">Component of the eukaryotic translation initiation factor 3 (eIF-3) complex, which is involved in protein synthesis of a specialized repertoire of mRNAs and, together with other initiation factors, stimulates binding of mRNA and methionyl-tRNAi to the 40S ribosome. The eIF-3 complex specifically targets and initiates translation of a subset of mRNAs involved in cell proliferation.</text>
</comment>
<comment type="subunit">
    <text evidence="2">Component of the eukaryotic translation initiation factor 3 (eIF-3) complex.</text>
</comment>
<comment type="subcellular location">
    <subcellularLocation>
        <location evidence="2">Cytoplasm</location>
    </subcellularLocation>
</comment>
<comment type="similarity">
    <text evidence="2">Belongs to the eIF-3 subunit I family.</text>
</comment>
<accession>A6ZMK5</accession>
<name>EIF3I_YEAS7</name>
<evidence type="ECO:0000250" key="1">
    <source>
        <dbReference type="UniProtKB" id="P40217"/>
    </source>
</evidence>
<evidence type="ECO:0000255" key="2">
    <source>
        <dbReference type="HAMAP-Rule" id="MF_03008"/>
    </source>
</evidence>
<gene>
    <name evidence="2" type="primary">TIF34</name>
    <name type="ORF">SCY_4321</name>
</gene>
<protein>
    <recommendedName>
        <fullName evidence="2">Eukaryotic translation initiation factor 3 subunit I</fullName>
        <shortName evidence="2">eIF3i</shortName>
    </recommendedName>
    <alternativeName>
        <fullName evidence="2">Eukaryotic translation initiation factor 3 39 kDa subunit homolog</fullName>
        <shortName evidence="2">eIF-3 39 kDa subunit homolog</shortName>
    </alternativeName>
</protein>